<organism>
    <name type="scientific">Mus musculus</name>
    <name type="common">Mouse</name>
    <dbReference type="NCBI Taxonomy" id="10090"/>
    <lineage>
        <taxon>Eukaryota</taxon>
        <taxon>Metazoa</taxon>
        <taxon>Chordata</taxon>
        <taxon>Craniata</taxon>
        <taxon>Vertebrata</taxon>
        <taxon>Euteleostomi</taxon>
        <taxon>Mammalia</taxon>
        <taxon>Eutheria</taxon>
        <taxon>Euarchontoglires</taxon>
        <taxon>Glires</taxon>
        <taxon>Rodentia</taxon>
        <taxon>Myomorpha</taxon>
        <taxon>Muroidea</taxon>
        <taxon>Muridae</taxon>
        <taxon>Murinae</taxon>
        <taxon>Mus</taxon>
        <taxon>Mus</taxon>
    </lineage>
</organism>
<accession>Q61792</accession>
<accession>Q62416</accession>
<gene>
    <name type="primary">Lasp1</name>
    <name type="synonym">Mln50</name>
</gene>
<comment type="function">
    <text evidence="1">Plays an important role in the regulation of dynamic actin-based, cytoskeletal activities. Agonist-dependent changes in LASP1 phosphorylation may also serve to regulate actin-associated ion transport activities, not only in the parietal cell but also in certain other F-actin-rich secretory epithelial cell types (By similarity).</text>
</comment>
<comment type="subunit">
    <text evidence="1 7">Interacts with F-actin. Interacts with KBTBD10 (By similarity). Interacts with ANKRD54.</text>
</comment>
<comment type="subcellular location">
    <subcellularLocation>
        <location evidence="1">Cytoplasm</location>
        <location evidence="1">Cell cortex</location>
    </subcellularLocation>
    <subcellularLocation>
        <location evidence="1">Cytoplasm</location>
        <location evidence="1">Cytoskeleton</location>
    </subcellularLocation>
    <text evidence="1">Associated with the F-actin rich cortical cytoskeleton.</text>
</comment>
<dbReference type="EMBL" id="X96973">
    <property type="protein sequence ID" value="CAA65659.1"/>
    <property type="molecule type" value="mRNA"/>
</dbReference>
<dbReference type="EMBL" id="AK078445">
    <property type="protein sequence ID" value="BAC37278.1"/>
    <property type="molecule type" value="mRNA"/>
</dbReference>
<dbReference type="EMBL" id="BC010840">
    <property type="protein sequence ID" value="AAH10840.1"/>
    <property type="molecule type" value="mRNA"/>
</dbReference>
<dbReference type="EMBL" id="U58882">
    <property type="protein sequence ID" value="AAC52639.1"/>
    <property type="molecule type" value="mRNA"/>
</dbReference>
<dbReference type="CCDS" id="CCDS25332.1"/>
<dbReference type="RefSeq" id="NP_001420206.1">
    <property type="nucleotide sequence ID" value="NM_001433277.1"/>
</dbReference>
<dbReference type="RefSeq" id="NP_034818.1">
    <property type="nucleotide sequence ID" value="NM_010688.5"/>
</dbReference>
<dbReference type="RefSeq" id="XP_006532404.1">
    <property type="nucleotide sequence ID" value="XM_006532341.1"/>
</dbReference>
<dbReference type="SMR" id="Q61792"/>
<dbReference type="BioGRID" id="201111">
    <property type="interactions" value="16"/>
</dbReference>
<dbReference type="ELM" id="Q61792"/>
<dbReference type="FunCoup" id="Q61792">
    <property type="interactions" value="1055"/>
</dbReference>
<dbReference type="IntAct" id="Q61792">
    <property type="interactions" value="4"/>
</dbReference>
<dbReference type="MINT" id="Q61792"/>
<dbReference type="STRING" id="10090.ENSMUSP00000042123"/>
<dbReference type="GlyGen" id="Q61792">
    <property type="glycosylation" value="3 sites, 1 O-linked glycan (3 sites)"/>
</dbReference>
<dbReference type="iPTMnet" id="Q61792"/>
<dbReference type="PhosphoSitePlus" id="Q61792"/>
<dbReference type="SwissPalm" id="Q61792"/>
<dbReference type="jPOST" id="Q61792"/>
<dbReference type="PaxDb" id="10090-ENSMUSP00000042123"/>
<dbReference type="ProteomicsDB" id="264842"/>
<dbReference type="Pumba" id="Q61792"/>
<dbReference type="Antibodypedia" id="1894">
    <property type="antibodies" value="399 antibodies from 37 providers"/>
</dbReference>
<dbReference type="DNASU" id="16796"/>
<dbReference type="Ensembl" id="ENSMUST00000043843.12">
    <property type="protein sequence ID" value="ENSMUSP00000042123.6"/>
    <property type="gene ID" value="ENSMUSG00000038366.16"/>
</dbReference>
<dbReference type="GeneID" id="16796"/>
<dbReference type="KEGG" id="mmu:16796"/>
<dbReference type="UCSC" id="uc007lew.1">
    <property type="organism name" value="mouse"/>
</dbReference>
<dbReference type="AGR" id="MGI:109656"/>
<dbReference type="CTD" id="3927"/>
<dbReference type="MGI" id="MGI:109656">
    <property type="gene designation" value="Lasp1"/>
</dbReference>
<dbReference type="VEuPathDB" id="HostDB:ENSMUSG00000038366"/>
<dbReference type="eggNOG" id="KOG1702">
    <property type="taxonomic scope" value="Eukaryota"/>
</dbReference>
<dbReference type="GeneTree" id="ENSGT00940000154775"/>
<dbReference type="HOGENOM" id="CLU_026811_0_1_1"/>
<dbReference type="InParanoid" id="Q61792"/>
<dbReference type="OMA" id="YHEDFDK"/>
<dbReference type="OrthoDB" id="191061at2759"/>
<dbReference type="PhylomeDB" id="Q61792"/>
<dbReference type="TreeFam" id="TF319104"/>
<dbReference type="BioGRID-ORCS" id="16796">
    <property type="hits" value="4 hits in 78 CRISPR screens"/>
</dbReference>
<dbReference type="CD-CODE" id="CE726F99">
    <property type="entry name" value="Postsynaptic density"/>
</dbReference>
<dbReference type="ChiTaRS" id="Lasp1">
    <property type="organism name" value="mouse"/>
</dbReference>
<dbReference type="PRO" id="PR:Q61792"/>
<dbReference type="Proteomes" id="UP000000589">
    <property type="component" value="Chromosome 11"/>
</dbReference>
<dbReference type="RNAct" id="Q61792">
    <property type="molecule type" value="protein"/>
</dbReference>
<dbReference type="Bgee" id="ENSMUSG00000038366">
    <property type="expression patterns" value="Expressed in pigmented layer of retina and 259 other cell types or tissues"/>
</dbReference>
<dbReference type="ExpressionAtlas" id="Q61792">
    <property type="expression patterns" value="baseline and differential"/>
</dbReference>
<dbReference type="GO" id="GO:0030864">
    <property type="term" value="C:cortical actin cytoskeleton"/>
    <property type="evidence" value="ECO:0000250"/>
    <property type="project" value="UniProtKB"/>
</dbReference>
<dbReference type="GO" id="GO:0005737">
    <property type="term" value="C:cytoplasm"/>
    <property type="evidence" value="ECO:0000314"/>
    <property type="project" value="MGI"/>
</dbReference>
<dbReference type="GO" id="GO:0005925">
    <property type="term" value="C:focal adhesion"/>
    <property type="evidence" value="ECO:0000314"/>
    <property type="project" value="MGI"/>
</dbReference>
<dbReference type="GO" id="GO:0051015">
    <property type="term" value="F:actin filament binding"/>
    <property type="evidence" value="ECO:0000314"/>
    <property type="project" value="MGI"/>
</dbReference>
<dbReference type="GO" id="GO:0046872">
    <property type="term" value="F:metal ion binding"/>
    <property type="evidence" value="ECO:0007669"/>
    <property type="project" value="UniProtKB-KW"/>
</dbReference>
<dbReference type="GO" id="GO:0015075">
    <property type="term" value="F:monoatomic ion transmembrane transporter activity"/>
    <property type="evidence" value="ECO:0000250"/>
    <property type="project" value="UniProtKB"/>
</dbReference>
<dbReference type="GO" id="GO:0006811">
    <property type="term" value="P:monoatomic ion transport"/>
    <property type="evidence" value="ECO:0000250"/>
    <property type="project" value="UniProtKB"/>
</dbReference>
<dbReference type="CDD" id="cd09447">
    <property type="entry name" value="LIM_LASP"/>
    <property type="match status" value="1"/>
</dbReference>
<dbReference type="CDD" id="cd11934">
    <property type="entry name" value="SH3_Lasp1_C"/>
    <property type="match status" value="1"/>
</dbReference>
<dbReference type="FunFam" id="2.10.110.10:FF:000087">
    <property type="entry name" value="LIM zinc-binding domain-containing Nebulette"/>
    <property type="match status" value="1"/>
</dbReference>
<dbReference type="FunFam" id="2.30.30.40:FF:000007">
    <property type="entry name" value="nebulin isoform X1"/>
    <property type="match status" value="1"/>
</dbReference>
<dbReference type="Gene3D" id="2.10.110.10">
    <property type="entry name" value="Cysteine Rich Protein"/>
    <property type="match status" value="1"/>
</dbReference>
<dbReference type="Gene3D" id="2.30.30.40">
    <property type="entry name" value="SH3 Domains"/>
    <property type="match status" value="1"/>
</dbReference>
<dbReference type="InterPro" id="IPR035630">
    <property type="entry name" value="Lasp1_SH3"/>
</dbReference>
<dbReference type="InterPro" id="IPR051759">
    <property type="entry name" value="LIM-SH3_domain_protein"/>
</dbReference>
<dbReference type="InterPro" id="IPR000900">
    <property type="entry name" value="Nebulin_repeat"/>
</dbReference>
<dbReference type="InterPro" id="IPR036028">
    <property type="entry name" value="SH3-like_dom_sf"/>
</dbReference>
<dbReference type="InterPro" id="IPR001452">
    <property type="entry name" value="SH3_domain"/>
</dbReference>
<dbReference type="InterPro" id="IPR001781">
    <property type="entry name" value="Znf_LIM"/>
</dbReference>
<dbReference type="PANTHER" id="PTHR46218">
    <property type="entry name" value="LASP"/>
    <property type="match status" value="1"/>
</dbReference>
<dbReference type="PANTHER" id="PTHR46218:SF2">
    <property type="entry name" value="LIM AND SH3 DOMAIN PROTEIN 1"/>
    <property type="match status" value="1"/>
</dbReference>
<dbReference type="Pfam" id="PF00412">
    <property type="entry name" value="LIM"/>
    <property type="match status" value="1"/>
</dbReference>
<dbReference type="Pfam" id="PF00880">
    <property type="entry name" value="Nebulin"/>
    <property type="match status" value="2"/>
</dbReference>
<dbReference type="Pfam" id="PF14604">
    <property type="entry name" value="SH3_9"/>
    <property type="match status" value="1"/>
</dbReference>
<dbReference type="PRINTS" id="PR00452">
    <property type="entry name" value="SH3DOMAIN"/>
</dbReference>
<dbReference type="SMART" id="SM00132">
    <property type="entry name" value="LIM"/>
    <property type="match status" value="1"/>
</dbReference>
<dbReference type="SMART" id="SM00227">
    <property type="entry name" value="NEBU"/>
    <property type="match status" value="2"/>
</dbReference>
<dbReference type="SMART" id="SM00326">
    <property type="entry name" value="SH3"/>
    <property type="match status" value="1"/>
</dbReference>
<dbReference type="SUPFAM" id="SSF57716">
    <property type="entry name" value="Glucocorticoid receptor-like (DNA-binding domain)"/>
    <property type="match status" value="1"/>
</dbReference>
<dbReference type="SUPFAM" id="SSF50044">
    <property type="entry name" value="SH3-domain"/>
    <property type="match status" value="1"/>
</dbReference>
<dbReference type="PROSITE" id="PS00478">
    <property type="entry name" value="LIM_DOMAIN_1"/>
    <property type="match status" value="1"/>
</dbReference>
<dbReference type="PROSITE" id="PS50023">
    <property type="entry name" value="LIM_DOMAIN_2"/>
    <property type="match status" value="1"/>
</dbReference>
<dbReference type="PROSITE" id="PS51216">
    <property type="entry name" value="NEBULIN"/>
    <property type="match status" value="2"/>
</dbReference>
<dbReference type="PROSITE" id="PS50002">
    <property type="entry name" value="SH3"/>
    <property type="match status" value="1"/>
</dbReference>
<name>LASP1_MOUSE</name>
<protein>
    <recommendedName>
        <fullName>LIM and SH3 domain protein 1</fullName>
        <shortName>LASP-1</shortName>
    </recommendedName>
    <alternativeName>
        <fullName>Metastatic lymph node gene 50 protein</fullName>
        <shortName>MLN 50</shortName>
    </alternativeName>
</protein>
<sequence>MNPNCARCGKIVYPTEKVNCLDKYWHKACFHCETCKMTLNMKNYKGYEKKPYCNAHYPKQSFTMVADTPENLRLKQQSELQSQVRYKEEFEKNKGKGFSVVADTPELQRIKKTQDQISNIKYHEEFEKSRMGPSGGEGVEPERREAQDSSSYRRPTEQQQPQPHHIPTSAPVYQQPQQQQMTSSYGGYKEPAAPVSIQRSAPGGGGKRYRAVYDYSAADEDEVSFQDGDTIVNVQQIDDGWMYGTVERTGDTGMLPANYVEAI</sequence>
<keyword id="KW-0007">Acetylation</keyword>
<keyword id="KW-0009">Actin-binding</keyword>
<keyword id="KW-0963">Cytoplasm</keyword>
<keyword id="KW-0206">Cytoskeleton</keyword>
<keyword id="KW-0406">Ion transport</keyword>
<keyword id="KW-0440">LIM domain</keyword>
<keyword id="KW-0479">Metal-binding</keyword>
<keyword id="KW-0488">Methylation</keyword>
<keyword id="KW-0597">Phosphoprotein</keyword>
<keyword id="KW-1185">Reference proteome</keyword>
<keyword id="KW-0677">Repeat</keyword>
<keyword id="KW-0728">SH3 domain</keyword>
<keyword id="KW-0813">Transport</keyword>
<keyword id="KW-0862">Zinc</keyword>
<evidence type="ECO:0000250" key="1"/>
<evidence type="ECO:0000250" key="2">
    <source>
        <dbReference type="UniProtKB" id="Q14847"/>
    </source>
</evidence>
<evidence type="ECO:0000255" key="3">
    <source>
        <dbReference type="PROSITE-ProRule" id="PRU00125"/>
    </source>
</evidence>
<evidence type="ECO:0000255" key="4">
    <source>
        <dbReference type="PROSITE-ProRule" id="PRU00192"/>
    </source>
</evidence>
<evidence type="ECO:0000256" key="5">
    <source>
        <dbReference type="SAM" id="MobiDB-lite"/>
    </source>
</evidence>
<evidence type="ECO:0000269" key="6">
    <source>
    </source>
</evidence>
<evidence type="ECO:0000269" key="7">
    <source>
    </source>
</evidence>
<evidence type="ECO:0007744" key="8">
    <source>
    </source>
</evidence>
<evidence type="ECO:0007744" key="9">
    <source>
    </source>
</evidence>
<reference key="1">
    <citation type="journal article" date="1998" name="Gene">
        <title>Chromosomal assignment and expression pattern of the murine Lasp-1 gene.</title>
        <authorList>
            <person name="Schreiber V."/>
            <person name="Masson R."/>
            <person name="Linares J.L."/>
            <person name="Mattei M.-G."/>
            <person name="Tomasetto C."/>
            <person name="Rio M.-C."/>
        </authorList>
    </citation>
    <scope>NUCLEOTIDE SEQUENCE [MRNA]</scope>
</reference>
<reference key="2">
    <citation type="journal article" date="2005" name="Science">
        <title>The transcriptional landscape of the mammalian genome.</title>
        <authorList>
            <person name="Carninci P."/>
            <person name="Kasukawa T."/>
            <person name="Katayama S."/>
            <person name="Gough J."/>
            <person name="Frith M.C."/>
            <person name="Maeda N."/>
            <person name="Oyama R."/>
            <person name="Ravasi T."/>
            <person name="Lenhard B."/>
            <person name="Wells C."/>
            <person name="Kodzius R."/>
            <person name="Shimokawa K."/>
            <person name="Bajic V.B."/>
            <person name="Brenner S.E."/>
            <person name="Batalov S."/>
            <person name="Forrest A.R."/>
            <person name="Zavolan M."/>
            <person name="Davis M.J."/>
            <person name="Wilming L.G."/>
            <person name="Aidinis V."/>
            <person name="Allen J.E."/>
            <person name="Ambesi-Impiombato A."/>
            <person name="Apweiler R."/>
            <person name="Aturaliya R.N."/>
            <person name="Bailey T.L."/>
            <person name="Bansal M."/>
            <person name="Baxter L."/>
            <person name="Beisel K.W."/>
            <person name="Bersano T."/>
            <person name="Bono H."/>
            <person name="Chalk A.M."/>
            <person name="Chiu K.P."/>
            <person name="Choudhary V."/>
            <person name="Christoffels A."/>
            <person name="Clutterbuck D.R."/>
            <person name="Crowe M.L."/>
            <person name="Dalla E."/>
            <person name="Dalrymple B.P."/>
            <person name="de Bono B."/>
            <person name="Della Gatta G."/>
            <person name="di Bernardo D."/>
            <person name="Down T."/>
            <person name="Engstrom P."/>
            <person name="Fagiolini M."/>
            <person name="Faulkner G."/>
            <person name="Fletcher C.F."/>
            <person name="Fukushima T."/>
            <person name="Furuno M."/>
            <person name="Futaki S."/>
            <person name="Gariboldi M."/>
            <person name="Georgii-Hemming P."/>
            <person name="Gingeras T.R."/>
            <person name="Gojobori T."/>
            <person name="Green R.E."/>
            <person name="Gustincich S."/>
            <person name="Harbers M."/>
            <person name="Hayashi Y."/>
            <person name="Hensch T.K."/>
            <person name="Hirokawa N."/>
            <person name="Hill D."/>
            <person name="Huminiecki L."/>
            <person name="Iacono M."/>
            <person name="Ikeo K."/>
            <person name="Iwama A."/>
            <person name="Ishikawa T."/>
            <person name="Jakt M."/>
            <person name="Kanapin A."/>
            <person name="Katoh M."/>
            <person name="Kawasawa Y."/>
            <person name="Kelso J."/>
            <person name="Kitamura H."/>
            <person name="Kitano H."/>
            <person name="Kollias G."/>
            <person name="Krishnan S.P."/>
            <person name="Kruger A."/>
            <person name="Kummerfeld S.K."/>
            <person name="Kurochkin I.V."/>
            <person name="Lareau L.F."/>
            <person name="Lazarevic D."/>
            <person name="Lipovich L."/>
            <person name="Liu J."/>
            <person name="Liuni S."/>
            <person name="McWilliam S."/>
            <person name="Madan Babu M."/>
            <person name="Madera M."/>
            <person name="Marchionni L."/>
            <person name="Matsuda H."/>
            <person name="Matsuzawa S."/>
            <person name="Miki H."/>
            <person name="Mignone F."/>
            <person name="Miyake S."/>
            <person name="Morris K."/>
            <person name="Mottagui-Tabar S."/>
            <person name="Mulder N."/>
            <person name="Nakano N."/>
            <person name="Nakauchi H."/>
            <person name="Ng P."/>
            <person name="Nilsson R."/>
            <person name="Nishiguchi S."/>
            <person name="Nishikawa S."/>
            <person name="Nori F."/>
            <person name="Ohara O."/>
            <person name="Okazaki Y."/>
            <person name="Orlando V."/>
            <person name="Pang K.C."/>
            <person name="Pavan W.J."/>
            <person name="Pavesi G."/>
            <person name="Pesole G."/>
            <person name="Petrovsky N."/>
            <person name="Piazza S."/>
            <person name="Reed J."/>
            <person name="Reid J.F."/>
            <person name="Ring B.Z."/>
            <person name="Ringwald M."/>
            <person name="Rost B."/>
            <person name="Ruan Y."/>
            <person name="Salzberg S.L."/>
            <person name="Sandelin A."/>
            <person name="Schneider C."/>
            <person name="Schoenbach C."/>
            <person name="Sekiguchi K."/>
            <person name="Semple C.A."/>
            <person name="Seno S."/>
            <person name="Sessa L."/>
            <person name="Sheng Y."/>
            <person name="Shibata Y."/>
            <person name="Shimada H."/>
            <person name="Shimada K."/>
            <person name="Silva D."/>
            <person name="Sinclair B."/>
            <person name="Sperling S."/>
            <person name="Stupka E."/>
            <person name="Sugiura K."/>
            <person name="Sultana R."/>
            <person name="Takenaka Y."/>
            <person name="Taki K."/>
            <person name="Tammoja K."/>
            <person name="Tan S.L."/>
            <person name="Tang S."/>
            <person name="Taylor M.S."/>
            <person name="Tegner J."/>
            <person name="Teichmann S.A."/>
            <person name="Ueda H.R."/>
            <person name="van Nimwegen E."/>
            <person name="Verardo R."/>
            <person name="Wei C.L."/>
            <person name="Yagi K."/>
            <person name="Yamanishi H."/>
            <person name="Zabarovsky E."/>
            <person name="Zhu S."/>
            <person name="Zimmer A."/>
            <person name="Hide W."/>
            <person name="Bult C."/>
            <person name="Grimmond S.M."/>
            <person name="Teasdale R.D."/>
            <person name="Liu E.T."/>
            <person name="Brusic V."/>
            <person name="Quackenbush J."/>
            <person name="Wahlestedt C."/>
            <person name="Mattick J.S."/>
            <person name="Hume D.A."/>
            <person name="Kai C."/>
            <person name="Sasaki D."/>
            <person name="Tomaru Y."/>
            <person name="Fukuda S."/>
            <person name="Kanamori-Katayama M."/>
            <person name="Suzuki M."/>
            <person name="Aoki J."/>
            <person name="Arakawa T."/>
            <person name="Iida J."/>
            <person name="Imamura K."/>
            <person name="Itoh M."/>
            <person name="Kato T."/>
            <person name="Kawaji H."/>
            <person name="Kawagashira N."/>
            <person name="Kawashima T."/>
            <person name="Kojima M."/>
            <person name="Kondo S."/>
            <person name="Konno H."/>
            <person name="Nakano K."/>
            <person name="Ninomiya N."/>
            <person name="Nishio T."/>
            <person name="Okada M."/>
            <person name="Plessy C."/>
            <person name="Shibata K."/>
            <person name="Shiraki T."/>
            <person name="Suzuki S."/>
            <person name="Tagami M."/>
            <person name="Waki K."/>
            <person name="Watahiki A."/>
            <person name="Okamura-Oho Y."/>
            <person name="Suzuki H."/>
            <person name="Kawai J."/>
            <person name="Hayashizaki Y."/>
        </authorList>
    </citation>
    <scope>NUCLEOTIDE SEQUENCE [LARGE SCALE MRNA]</scope>
    <source>
        <strain>C57BL/6J</strain>
    </source>
</reference>
<reference key="3">
    <citation type="journal article" date="2004" name="Genome Res.">
        <title>The status, quality, and expansion of the NIH full-length cDNA project: the Mammalian Gene Collection (MGC).</title>
        <authorList>
            <consortium name="The MGC Project Team"/>
        </authorList>
    </citation>
    <scope>NUCLEOTIDE SEQUENCE [LARGE SCALE MRNA]</scope>
    <source>
        <strain>C57BL/6J</strain>
        <tissue>Mammary gland</tissue>
    </source>
</reference>
<reference key="4">
    <citation type="journal article" date="1996" name="Nat. Biotechnol.">
        <title>Cloning of ligand targets: systematic isolation of SH3 domain-containing proteins.</title>
        <authorList>
            <person name="Sparks A.B."/>
            <person name="Hoffman N.G."/>
            <person name="McConnell S.J."/>
            <person name="Fowlkes D.M."/>
            <person name="Kay B.K."/>
        </authorList>
    </citation>
    <scope>NUCLEOTIDE SEQUENCE [MRNA] OF 59-263</scope>
</reference>
<reference key="5">
    <citation type="journal article" date="2004" name="Biochem. Biophys. Res. Commun.">
        <title>Phosphorylation of mouse LASP-1 on threonine 156 by cAMP- and cGMP-dependent protein kinase.</title>
        <authorList>
            <person name="Keicher C."/>
            <person name="Gambaryan S."/>
            <person name="Schulze E."/>
            <person name="Marcus K."/>
            <person name="Meyer H.E."/>
            <person name="Butt E."/>
        </authorList>
    </citation>
    <scope>PHOSPHORYLATION AT THR-156</scope>
</reference>
<reference key="6">
    <citation type="journal article" date="2009" name="Blood">
        <title>Liar, a novel Lyn-binding nuclear/cytoplasmic shuttling protein that influences erythropoietin-induced differentiation.</title>
        <authorList>
            <person name="Samuels A.L."/>
            <person name="Klinken S.P."/>
            <person name="Ingley E."/>
        </authorList>
    </citation>
    <scope>INTERACTION WITH ANKRD54</scope>
</reference>
<reference key="7">
    <citation type="journal article" date="2010" name="Cell">
        <title>A tissue-specific atlas of mouse protein phosphorylation and expression.</title>
        <authorList>
            <person name="Huttlin E.L."/>
            <person name="Jedrychowski M.P."/>
            <person name="Elias J.E."/>
            <person name="Goswami T."/>
            <person name="Rad R."/>
            <person name="Beausoleil S.A."/>
            <person name="Villen J."/>
            <person name="Haas W."/>
            <person name="Sowa M.E."/>
            <person name="Gygi S.P."/>
        </authorList>
    </citation>
    <scope>PHOSPHORYLATION [LARGE SCALE ANALYSIS] AT THR-104</scope>
    <scope>IDENTIFICATION BY MASS SPECTROMETRY [LARGE SCALE ANALYSIS]</scope>
    <source>
        <tissue>Brain</tissue>
        <tissue>Brown adipose tissue</tissue>
        <tissue>Kidney</tissue>
        <tissue>Liver</tissue>
        <tissue>Lung</tissue>
        <tissue>Pancreas</tissue>
        <tissue>Spleen</tissue>
        <tissue>Testis</tissue>
    </source>
</reference>
<reference key="8">
    <citation type="journal article" date="2013" name="Mol. Cell">
        <title>SIRT5-mediated lysine desuccinylation impacts diverse metabolic pathways.</title>
        <authorList>
            <person name="Park J."/>
            <person name="Chen Y."/>
            <person name="Tishkoff D.X."/>
            <person name="Peng C."/>
            <person name="Tan M."/>
            <person name="Dai L."/>
            <person name="Xie Z."/>
            <person name="Zhang Y."/>
            <person name="Zwaans B.M."/>
            <person name="Skinner M.E."/>
            <person name="Lombard D.B."/>
            <person name="Zhao Y."/>
        </authorList>
    </citation>
    <scope>SUCCINYLATION [LARGE SCALE ANALYSIS] AT LYS-112</scope>
    <scope>IDENTIFICATION BY MASS SPECTROMETRY [LARGE SCALE ANALYSIS]</scope>
    <source>
        <tissue>Embryonic fibroblast</tissue>
    </source>
</reference>
<proteinExistence type="evidence at protein level"/>
<feature type="chain" id="PRO_0000075762" description="LIM and SH3 domain protein 1">
    <location>
        <begin position="1"/>
        <end position="263"/>
    </location>
</feature>
<feature type="domain" description="LIM zinc-binding" evidence="3">
    <location>
        <begin position="5"/>
        <end position="56"/>
    </location>
</feature>
<feature type="repeat" description="Nebulin 1">
    <location>
        <begin position="61"/>
        <end position="95"/>
    </location>
</feature>
<feature type="repeat" description="Nebulin 2">
    <location>
        <begin position="97"/>
        <end position="131"/>
    </location>
</feature>
<feature type="domain" description="SH3" evidence="4">
    <location>
        <begin position="204"/>
        <end position="263"/>
    </location>
</feature>
<feature type="region of interest" description="Disordered" evidence="5">
    <location>
        <begin position="123"/>
        <end position="207"/>
    </location>
</feature>
<feature type="compositionally biased region" description="Polar residues" evidence="5">
    <location>
        <begin position="148"/>
        <end position="162"/>
    </location>
</feature>
<feature type="modified residue" description="N-acetylmethionine" evidence="2">
    <location>
        <position position="1"/>
    </location>
</feature>
<feature type="modified residue" description="N6-acetyllysine" evidence="2">
    <location>
        <position position="42"/>
    </location>
</feature>
<feature type="modified residue" description="Phosphothreonine" evidence="2">
    <location>
        <position position="68"/>
    </location>
</feature>
<feature type="modified residue" description="N6-methyllysine" evidence="2">
    <location>
        <position position="75"/>
    </location>
</feature>
<feature type="modified residue" description="Phosphoserine" evidence="2">
    <location>
        <position position="99"/>
    </location>
</feature>
<feature type="modified residue" description="Phosphothreonine" evidence="8">
    <location>
        <position position="104"/>
    </location>
</feature>
<feature type="modified residue" description="N6-succinyllysine" evidence="9">
    <location>
        <position position="112"/>
    </location>
</feature>
<feature type="modified residue" description="Phosphoserine" evidence="2">
    <location>
        <position position="118"/>
    </location>
</feature>
<feature type="modified residue" description="Phosphoserine" evidence="2">
    <location>
        <position position="134"/>
    </location>
</feature>
<feature type="modified residue" description="Phosphothreonine; by PKA" evidence="6">
    <location>
        <position position="156"/>
    </location>
</feature>